<name>U6A_CONER</name>
<organism>
    <name type="scientific">Conus ermineus</name>
    <name type="common">Agate cone</name>
    <name type="synonym">Chelyconus ermineus</name>
    <dbReference type="NCBI Taxonomy" id="55423"/>
    <lineage>
        <taxon>Eukaryota</taxon>
        <taxon>Metazoa</taxon>
        <taxon>Spiralia</taxon>
        <taxon>Lophotrochozoa</taxon>
        <taxon>Mollusca</taxon>
        <taxon>Gastropoda</taxon>
        <taxon>Caenogastropoda</taxon>
        <taxon>Neogastropoda</taxon>
        <taxon>Conoidea</taxon>
        <taxon>Conidae</taxon>
        <taxon>Conus</taxon>
        <taxon>Chelyconus</taxon>
    </lineage>
</organism>
<evidence type="ECO:0000269" key="1">
    <source>
    </source>
</evidence>
<evidence type="ECO:0000269" key="2">
    <source>
    </source>
</evidence>
<evidence type="ECO:0000303" key="3">
    <source>
    </source>
</evidence>
<evidence type="ECO:0000303" key="4">
    <source>
    </source>
</evidence>
<evidence type="ECO:0000305" key="5"/>
<evidence type="ECO:0000305" key="6">
    <source>
    </source>
</evidence>
<evidence type="ECO:0000312" key="7">
    <source>
        <dbReference type="PDB" id="1G1P"/>
    </source>
</evidence>
<evidence type="ECO:0000312" key="8">
    <source>
        <dbReference type="PDB" id="1G1Z"/>
    </source>
</evidence>
<evidence type="ECO:0007829" key="9">
    <source>
        <dbReference type="PDB" id="1G1P"/>
    </source>
</evidence>
<proteinExistence type="evidence at protein level"/>
<comment type="function">
    <text evidence="1">Delta-conotoxins bind to site 6 of voltage-gated sodium channels and inhibit the inactivation process. This toxin inhibits sodium channel inactivation in neuronal membranes from amphibians and mammals (Nav1.2a/SCN1A, Nav1.3/SCN3A and Nav1.6/SCN8A) upon binding to receptor site 6.</text>
</comment>
<comment type="subcellular location">
    <subcellularLocation>
        <location evidence="1 2">Secreted</location>
    </subcellularLocation>
</comment>
<comment type="tissue specificity">
    <text evidence="1 2">Expressed by the venom duct.</text>
</comment>
<comment type="domain">
    <text evidence="2 7 8">The presence of a 'disulfide through disulfide knot' structurally defines this protein as a knottin.</text>
</comment>
<comment type="domain">
    <text evidence="5">The cysteine framework is VI/VII (C-C-CC-C-C).</text>
</comment>
<comment type="mass spectrometry"/>
<comment type="toxic dose">
    <text evidence="2">Dose that produces hyperactivity (ED(50)) is 1.8 pmol/g body mass (native toxin), 1.9 pmol/g body mass (synthetic toxin) and 3.9 pmol/g body mass (P13A mutant).</text>
</comment>
<comment type="miscellaneous">
    <text evidence="6">Negative results: does not affect rat skeletal muscle (Nav1.4/SCN4A) and human cardiac muscle (Nav1.5/SCN5A) sodium channels.</text>
</comment>
<comment type="miscellaneous">
    <text evidence="2">Exists in two forms, due to cis-trans isomerization at 12-Leu-Pro-13.</text>
</comment>
<comment type="similarity">
    <text evidence="5">Belongs to the conotoxin O1 superfamily.</text>
</comment>
<comment type="caution">
    <text evidence="5">Another delta-conotoxin was named EVIA in 2001, but this toxin was renamed EVIB (AC P69752).</text>
</comment>
<protein>
    <recommendedName>
        <fullName evidence="3 4">Delta-conotoxin EVIA</fullName>
        <shortName evidence="3 4">Delta-EVIA</shortName>
    </recommendedName>
</protein>
<feature type="peptide" id="PRO_0000044868" description="Delta-conotoxin EVIA" evidence="1">
    <location>
        <begin position="1"/>
        <end position="32"/>
    </location>
</feature>
<feature type="modified residue" description="4-hydroxyproline" evidence="1">
    <location>
        <position position="6"/>
    </location>
</feature>
<feature type="modified residue" description="Leucine amide" evidence="1">
    <location>
        <position position="32"/>
    </location>
</feature>
<feature type="disulfide bond" evidence="2 7 8">
    <location>
        <begin position="3"/>
        <end position="21"/>
    </location>
</feature>
<feature type="disulfide bond" evidence="2 7 8">
    <location>
        <begin position="10"/>
        <end position="25"/>
    </location>
</feature>
<feature type="disulfide bond" evidence="2 7 8">
    <location>
        <begin position="20"/>
        <end position="29"/>
    </location>
</feature>
<feature type="mutagenesis site" description="2-fold decrease of activity. Exists only as a trans isomer." evidence="2">
    <original>P</original>
    <variation>A</variation>
    <location>
        <position position="13"/>
    </location>
</feature>
<feature type="strand" evidence="9">
    <location>
        <begin position="13"/>
        <end position="16"/>
    </location>
</feature>
<feature type="strand" evidence="9">
    <location>
        <begin position="25"/>
        <end position="29"/>
    </location>
</feature>
<reference key="1">
    <citation type="journal article" date="2004" name="J. Biol. Chem.">
        <title>A delta-conotoxin from Conus ermineus venom inhibits inactivation in vertebrate neuronal Na+ channels but not in skeletal and cardiac muscles.</title>
        <authorList>
            <person name="Barbier J."/>
            <person name="Lamthanh H."/>
            <person name="Le Gall F."/>
            <person name="Favreau P."/>
            <person name="Benoit E."/>
            <person name="Chen H."/>
            <person name="Gilles N."/>
            <person name="Ilan N."/>
            <person name="Heinemann S.H."/>
            <person name="Gordon D."/>
            <person name="Menez A."/>
            <person name="Molgo J."/>
        </authorList>
    </citation>
    <scope>PROTEIN SEQUENCE</scope>
    <scope>FUNCTION</scope>
    <scope>SUBCELLULAR LOCATION</scope>
    <scope>TISSUE SPECIFICITY</scope>
    <scope>MASS SPECTROMETRY</scope>
    <scope>HYDROXYLATION AT PRO-6</scope>
    <scope>AMIDATION AT LEU-32</scope>
    <scope>SYNTHESIS</scope>
    <source>
        <tissue>Venom</tissue>
    </source>
</reference>
<reference key="2">
    <citation type="journal article" date="2004" name="J. Biol. Chem.">
        <title>NMR solution structures of delta-conotoxin EVIA from Conus ermineus that selectively acts on vertebrate neuronal Na+ channels.</title>
        <authorList>
            <person name="Volpon L."/>
            <person name="Lamthanh H."/>
            <person name="Barbier J."/>
            <person name="Gilles N."/>
            <person name="Molgo J."/>
            <person name="Menez A."/>
            <person name="Lancelin J.-M."/>
        </authorList>
    </citation>
    <scope>STRUCTURE BY NMR</scope>
    <scope>SUBCELLULAR LOCATION</scope>
    <scope>TISSUE SPECIFICITY</scope>
    <scope>TOXIC DOSE</scope>
    <scope>DISULFIDE BONDS</scope>
    <scope>SYNTHESIS</scope>
    <scope>MUTAGENESIS OF PRO-13</scope>
    <source>
        <tissue>Venom</tissue>
    </source>
</reference>
<sequence>DDCIKPYGFCSLPILKNGLCCSGACVGVCADL</sequence>
<accession>P60513</accession>
<keyword id="KW-0002">3D-structure</keyword>
<keyword id="KW-0027">Amidation</keyword>
<keyword id="KW-0903">Direct protein sequencing</keyword>
<keyword id="KW-1015">Disulfide bond</keyword>
<keyword id="KW-0379">Hydroxylation</keyword>
<keyword id="KW-0872">Ion channel impairing toxin</keyword>
<keyword id="KW-0960">Knottin</keyword>
<keyword id="KW-0528">Neurotoxin</keyword>
<keyword id="KW-0964">Secreted</keyword>
<keyword id="KW-0800">Toxin</keyword>
<keyword id="KW-0738">Voltage-gated sodium channel impairing toxin</keyword>
<dbReference type="PDB" id="1G1P">
    <property type="method" value="NMR"/>
    <property type="chains" value="A=1-32"/>
</dbReference>
<dbReference type="PDB" id="1G1Z">
    <property type="method" value="NMR"/>
    <property type="chains" value="A=1-32"/>
</dbReference>
<dbReference type="PDBsum" id="1G1P"/>
<dbReference type="PDBsum" id="1G1Z"/>
<dbReference type="SMR" id="P60513"/>
<dbReference type="ConoServer" id="1561">
    <property type="toxin name" value="EVIA"/>
</dbReference>
<dbReference type="EvolutionaryTrace" id="P60513"/>
<dbReference type="GO" id="GO:0005576">
    <property type="term" value="C:extracellular region"/>
    <property type="evidence" value="ECO:0007669"/>
    <property type="project" value="UniProtKB-SubCell"/>
</dbReference>
<dbReference type="GO" id="GO:0019871">
    <property type="term" value="F:sodium channel inhibitor activity"/>
    <property type="evidence" value="ECO:0007669"/>
    <property type="project" value="InterPro"/>
</dbReference>
<dbReference type="GO" id="GO:0090729">
    <property type="term" value="F:toxin activity"/>
    <property type="evidence" value="ECO:0007669"/>
    <property type="project" value="UniProtKB-KW"/>
</dbReference>
<dbReference type="InterPro" id="IPR012322">
    <property type="entry name" value="Conotoxin_d-typ_CS"/>
</dbReference>
<dbReference type="SUPFAM" id="SSF57059">
    <property type="entry name" value="omega toxin-like"/>
    <property type="match status" value="1"/>
</dbReference>
<dbReference type="PROSITE" id="PS60005">
    <property type="entry name" value="DELTA_CONOTOXIN"/>
    <property type="match status" value="1"/>
</dbReference>